<proteinExistence type="inferred from homology"/>
<geneLocation type="chloroplast"/>
<dbReference type="EMBL" id="AY958086">
    <property type="protein sequence ID" value="AAX45798.1"/>
    <property type="molecule type" value="Genomic_DNA"/>
</dbReference>
<dbReference type="RefSeq" id="YP_636516.1">
    <property type="nucleotide sequence ID" value="NC_008117.1"/>
</dbReference>
<dbReference type="SMR" id="Q32RL0"/>
<dbReference type="GeneID" id="4108258"/>
<dbReference type="GO" id="GO:0009535">
    <property type="term" value="C:chloroplast thylakoid membrane"/>
    <property type="evidence" value="ECO:0007669"/>
    <property type="project" value="UniProtKB-SubCell"/>
</dbReference>
<dbReference type="GO" id="GO:0045259">
    <property type="term" value="C:proton-transporting ATP synthase complex"/>
    <property type="evidence" value="ECO:0007669"/>
    <property type="project" value="UniProtKB-KW"/>
</dbReference>
<dbReference type="GO" id="GO:0046933">
    <property type="term" value="F:proton-transporting ATP synthase activity, rotational mechanism"/>
    <property type="evidence" value="ECO:0007669"/>
    <property type="project" value="UniProtKB-UniRule"/>
</dbReference>
<dbReference type="CDD" id="cd06503">
    <property type="entry name" value="ATP-synt_Fo_b"/>
    <property type="match status" value="1"/>
</dbReference>
<dbReference type="HAMAP" id="MF_01398">
    <property type="entry name" value="ATP_synth_b_bprime"/>
    <property type="match status" value="1"/>
</dbReference>
<dbReference type="InterPro" id="IPR002146">
    <property type="entry name" value="ATP_synth_b/b'su_bac/chlpt"/>
</dbReference>
<dbReference type="NCBIfam" id="NF005606">
    <property type="entry name" value="PRK07352.1"/>
    <property type="match status" value="1"/>
</dbReference>
<dbReference type="PANTHER" id="PTHR34264">
    <property type="entry name" value="ATP SYNTHASE SUBUNIT B, CHLOROPLASTIC"/>
    <property type="match status" value="1"/>
</dbReference>
<dbReference type="PANTHER" id="PTHR34264:SF3">
    <property type="entry name" value="ATP SYNTHASE SUBUNIT B, CHLOROPLASTIC"/>
    <property type="match status" value="1"/>
</dbReference>
<dbReference type="Pfam" id="PF00430">
    <property type="entry name" value="ATP-synt_B"/>
    <property type="match status" value="1"/>
</dbReference>
<sequence>MGERIKSTMDLLIYLQNSHLATGFGFNTNLFETNLINLAVVIGVLVYFGKGVLTTLLNNRKETIVNTIRDAEERYQEATEKLNKAYTRLEQAKAKAEEIRVNGLAQMEIEKQELIKAADEDSKRLEDSKNATLRFEEQRAIEQVRQQVSRLALELALETLKTRLNRDLHAQMIDYHIGLLQSMESVID</sequence>
<accession>Q32RL0</accession>
<organism>
    <name type="scientific">Zygnema circumcarinatum</name>
    <name type="common">Green alga</name>
    <dbReference type="NCBI Taxonomy" id="35869"/>
    <lineage>
        <taxon>Eukaryota</taxon>
        <taxon>Viridiplantae</taxon>
        <taxon>Streptophyta</taxon>
        <taxon>Zygnematophyceae</taxon>
        <taxon>Zygnematophycidae</taxon>
        <taxon>Zygnematales</taxon>
        <taxon>Zygnemataceae</taxon>
        <taxon>Zygnema</taxon>
    </lineage>
</organism>
<evidence type="ECO:0000255" key="1">
    <source>
        <dbReference type="HAMAP-Rule" id="MF_01398"/>
    </source>
</evidence>
<protein>
    <recommendedName>
        <fullName evidence="1">ATP synthase subunit b, chloroplastic</fullName>
    </recommendedName>
    <alternativeName>
        <fullName evidence="1">ATP synthase F(0) sector subunit b</fullName>
    </alternativeName>
    <alternativeName>
        <fullName evidence="1">ATPase subunit I</fullName>
    </alternativeName>
</protein>
<gene>
    <name evidence="1" type="primary">atpF</name>
</gene>
<reference key="1">
    <citation type="journal article" date="2005" name="BMC Biol.">
        <title>The complete chloroplast DNA sequences of the charophycean green algae Staurastrum and Zygnema reveal that the chloroplast genome underwent extensive changes during the evolution of the Zygnematales.</title>
        <authorList>
            <person name="Turmel M."/>
            <person name="Otis C."/>
            <person name="Lemieux C."/>
        </authorList>
    </citation>
    <scope>NUCLEOTIDE SEQUENCE [LARGE SCALE GENOMIC DNA]</scope>
</reference>
<comment type="function">
    <text evidence="1">F(1)F(0) ATP synthase produces ATP from ADP in the presence of a proton or sodium gradient. F-type ATPases consist of two structural domains, F(1) containing the extramembraneous catalytic core and F(0) containing the membrane proton channel, linked together by a central stalk and a peripheral stalk. During catalysis, ATP synthesis in the catalytic domain of F(1) is coupled via a rotary mechanism of the central stalk subunits to proton translocation.</text>
</comment>
<comment type="function">
    <text evidence="1">Component of the F(0) channel, it forms part of the peripheral stalk, linking F(1) to F(0).</text>
</comment>
<comment type="subunit">
    <text evidence="1">F-type ATPases have 2 components, F(1) - the catalytic core - and F(0) - the membrane proton channel. F(1) has five subunits: alpha(3), beta(3), gamma(1), delta(1), epsilon(1). F(0) has four main subunits: a(1), b(1), b'(1) and c(10-14). The alpha and beta chains form an alternating ring which encloses part of the gamma chain. F(1) is attached to F(0) by a central stalk formed by the gamma and epsilon chains, while a peripheral stalk is formed by the delta, b and b' chains.</text>
</comment>
<comment type="subcellular location">
    <subcellularLocation>
        <location evidence="1">Plastid</location>
        <location evidence="1">Chloroplast thylakoid membrane</location>
        <topology evidence="1">Single-pass membrane protein</topology>
    </subcellularLocation>
</comment>
<comment type="miscellaneous">
    <text>In plastids the F-type ATPase is also known as CF(1)CF(0).</text>
</comment>
<comment type="similarity">
    <text evidence="1">Belongs to the ATPase B chain family.</text>
</comment>
<feature type="chain" id="PRO_0000368985" description="ATP synthase subunit b, chloroplastic">
    <location>
        <begin position="1"/>
        <end position="188"/>
    </location>
</feature>
<feature type="transmembrane region" description="Helical" evidence="1">
    <location>
        <begin position="35"/>
        <end position="57"/>
    </location>
</feature>
<name>ATPF_ZYGCR</name>
<keyword id="KW-0066">ATP synthesis</keyword>
<keyword id="KW-0138">CF(0)</keyword>
<keyword id="KW-0150">Chloroplast</keyword>
<keyword id="KW-0375">Hydrogen ion transport</keyword>
<keyword id="KW-0406">Ion transport</keyword>
<keyword id="KW-0472">Membrane</keyword>
<keyword id="KW-0934">Plastid</keyword>
<keyword id="KW-0793">Thylakoid</keyword>
<keyword id="KW-0812">Transmembrane</keyword>
<keyword id="KW-1133">Transmembrane helix</keyword>
<keyword id="KW-0813">Transport</keyword>